<proteinExistence type="inferred from homology"/>
<accession>Q5JGD6</accession>
<sequence length="186" mass="21079">MRVILIVPIGYIPEWLIKDVAEFVDSYYSRRGVSVKAGDSLSESLFLSAYHPFRRQFLGGAFLPTLSEIGRRAGALATVGITKVDLYEKGMNFVFGVASEKLRSAVVSIHRLRPEFYGRPSNDELLIERTVKEVMHELGHVFGLSHCPNVRCVMHFSNSVDDTDIKLPYYCPNCERKLLRNLEVVL</sequence>
<organism>
    <name type="scientific">Thermococcus kodakarensis (strain ATCC BAA-918 / JCM 12380 / KOD1)</name>
    <name type="common">Pyrococcus kodakaraensis (strain KOD1)</name>
    <dbReference type="NCBI Taxonomy" id="69014"/>
    <lineage>
        <taxon>Archaea</taxon>
        <taxon>Methanobacteriati</taxon>
        <taxon>Methanobacteriota</taxon>
        <taxon>Thermococci</taxon>
        <taxon>Thermococcales</taxon>
        <taxon>Thermococcaceae</taxon>
        <taxon>Thermococcus</taxon>
    </lineage>
</organism>
<reference key="1">
    <citation type="journal article" date="2005" name="Genome Res.">
        <title>Complete genome sequence of the hyperthermophilic archaeon Thermococcus kodakaraensis KOD1 and comparison with Pyrococcus genomes.</title>
        <authorList>
            <person name="Fukui T."/>
            <person name="Atomi H."/>
            <person name="Kanai T."/>
            <person name="Matsumi R."/>
            <person name="Fujiwara S."/>
            <person name="Imanaka T."/>
        </authorList>
    </citation>
    <scope>NUCLEOTIDE SEQUENCE [LARGE SCALE GENOMIC DNA]</scope>
    <source>
        <strain>ATCC BAA-918 / JCM 12380 / KOD1</strain>
    </source>
</reference>
<gene>
    <name evidence="1" type="primary">amzA</name>
    <name type="ordered locus">TK1178</name>
</gene>
<name>AMZA_THEKO</name>
<protein>
    <recommendedName>
        <fullName evidence="1">Archaemetzincin</fullName>
        <ecNumber evidence="1">3.4.-.-</ecNumber>
    </recommendedName>
</protein>
<keyword id="KW-0378">Hydrolase</keyword>
<keyword id="KW-0479">Metal-binding</keyword>
<keyword id="KW-0482">Metalloprotease</keyword>
<keyword id="KW-0645">Protease</keyword>
<keyword id="KW-1185">Reference proteome</keyword>
<keyword id="KW-0862">Zinc</keyword>
<dbReference type="EC" id="3.4.-.-" evidence="1"/>
<dbReference type="EMBL" id="AP006878">
    <property type="protein sequence ID" value="BAD85367.1"/>
    <property type="molecule type" value="Genomic_DNA"/>
</dbReference>
<dbReference type="RefSeq" id="WP_011250129.1">
    <property type="nucleotide sequence ID" value="NC_006624.1"/>
</dbReference>
<dbReference type="SMR" id="Q5JGD6"/>
<dbReference type="FunCoup" id="Q5JGD6">
    <property type="interactions" value="1"/>
</dbReference>
<dbReference type="STRING" id="69014.TK1178"/>
<dbReference type="EnsemblBacteria" id="BAD85367">
    <property type="protein sequence ID" value="BAD85367"/>
    <property type="gene ID" value="TK1178"/>
</dbReference>
<dbReference type="GeneID" id="78447693"/>
<dbReference type="KEGG" id="tko:TK1178"/>
<dbReference type="PATRIC" id="fig|69014.16.peg.1153"/>
<dbReference type="eggNOG" id="arCOG00458">
    <property type="taxonomic scope" value="Archaea"/>
</dbReference>
<dbReference type="HOGENOM" id="CLU_108521_2_0_2"/>
<dbReference type="InParanoid" id="Q5JGD6"/>
<dbReference type="OrthoDB" id="50281at2157"/>
<dbReference type="PhylomeDB" id="Q5JGD6"/>
<dbReference type="Proteomes" id="UP000000536">
    <property type="component" value="Chromosome"/>
</dbReference>
<dbReference type="GO" id="GO:0008237">
    <property type="term" value="F:metallopeptidase activity"/>
    <property type="evidence" value="ECO:0007669"/>
    <property type="project" value="UniProtKB-UniRule"/>
</dbReference>
<dbReference type="GO" id="GO:0008270">
    <property type="term" value="F:zinc ion binding"/>
    <property type="evidence" value="ECO:0007669"/>
    <property type="project" value="UniProtKB-UniRule"/>
</dbReference>
<dbReference type="GO" id="GO:0006508">
    <property type="term" value="P:proteolysis"/>
    <property type="evidence" value="ECO:0007669"/>
    <property type="project" value="UniProtKB-UniRule"/>
</dbReference>
<dbReference type="CDD" id="cd11375">
    <property type="entry name" value="Peptidase_M54"/>
    <property type="match status" value="1"/>
</dbReference>
<dbReference type="Gene3D" id="3.40.390.10">
    <property type="entry name" value="Collagenase (Catalytic Domain)"/>
    <property type="match status" value="1"/>
</dbReference>
<dbReference type="HAMAP" id="MF_01842">
    <property type="entry name" value="Archaemetzincin"/>
    <property type="match status" value="1"/>
</dbReference>
<dbReference type="InterPro" id="IPR024079">
    <property type="entry name" value="MetalloPept_cat_dom_sf"/>
</dbReference>
<dbReference type="InterPro" id="IPR012962">
    <property type="entry name" value="Pept_M54_archaemetzincn"/>
</dbReference>
<dbReference type="InterPro" id="IPR012091">
    <property type="entry name" value="Pept_M54_archaemetzncn_arc/bac"/>
</dbReference>
<dbReference type="NCBIfam" id="NF033823">
    <property type="entry name" value="archmetzin"/>
    <property type="match status" value="1"/>
</dbReference>
<dbReference type="PANTHER" id="PTHR15910">
    <property type="entry name" value="ARCHAEMETZINCIN"/>
    <property type="match status" value="1"/>
</dbReference>
<dbReference type="PANTHER" id="PTHR15910:SF1">
    <property type="entry name" value="ARCHAEMETZINCIN-2"/>
    <property type="match status" value="1"/>
</dbReference>
<dbReference type="Pfam" id="PF07998">
    <property type="entry name" value="Peptidase_M54"/>
    <property type="match status" value="1"/>
</dbReference>
<dbReference type="PIRSF" id="PIRSF005785">
    <property type="entry name" value="Zn-prot_arch"/>
    <property type="match status" value="1"/>
</dbReference>
<dbReference type="SUPFAM" id="SSF55486">
    <property type="entry name" value="Metalloproteases ('zincins'), catalytic domain"/>
    <property type="match status" value="1"/>
</dbReference>
<feature type="chain" id="PRO_0000159634" description="Archaemetzincin">
    <location>
        <begin position="1"/>
        <end position="186"/>
    </location>
</feature>
<feature type="active site" description="Proton acceptor" evidence="1">
    <location>
        <position position="137"/>
    </location>
</feature>
<feature type="binding site" evidence="1">
    <location>
        <position position="136"/>
    </location>
    <ligand>
        <name>Zn(2+)</name>
        <dbReference type="ChEBI" id="CHEBI:29105"/>
        <label>1</label>
        <note>catalytic</note>
    </ligand>
</feature>
<feature type="binding site" evidence="1">
    <location>
        <position position="140"/>
    </location>
    <ligand>
        <name>Zn(2+)</name>
        <dbReference type="ChEBI" id="CHEBI:29105"/>
        <label>1</label>
        <note>catalytic</note>
    </ligand>
</feature>
<feature type="binding site" evidence="1">
    <location>
        <position position="146"/>
    </location>
    <ligand>
        <name>Zn(2+)</name>
        <dbReference type="ChEBI" id="CHEBI:29105"/>
        <label>1</label>
        <note>catalytic</note>
    </ligand>
</feature>
<feature type="binding site" evidence="1">
    <location>
        <position position="147"/>
    </location>
    <ligand>
        <name>Zn(2+)</name>
        <dbReference type="ChEBI" id="CHEBI:29105"/>
        <label>2</label>
    </ligand>
</feature>
<feature type="binding site" evidence="1">
    <location>
        <position position="152"/>
    </location>
    <ligand>
        <name>Zn(2+)</name>
        <dbReference type="ChEBI" id="CHEBI:29105"/>
        <label>2</label>
    </ligand>
</feature>
<feature type="binding site" evidence="1">
    <location>
        <position position="171"/>
    </location>
    <ligand>
        <name>Zn(2+)</name>
        <dbReference type="ChEBI" id="CHEBI:29105"/>
        <label>2</label>
    </ligand>
</feature>
<feature type="binding site" evidence="1">
    <location>
        <position position="174"/>
    </location>
    <ligand>
        <name>Zn(2+)</name>
        <dbReference type="ChEBI" id="CHEBI:29105"/>
        <label>2</label>
    </ligand>
</feature>
<evidence type="ECO:0000255" key="1">
    <source>
        <dbReference type="HAMAP-Rule" id="MF_01842"/>
    </source>
</evidence>
<comment type="function">
    <text evidence="1">Probable zinc metalloprotease whose natural substrate is unknown.</text>
</comment>
<comment type="cofactor">
    <cofactor evidence="1">
        <name>Zn(2+)</name>
        <dbReference type="ChEBI" id="CHEBI:29105"/>
    </cofactor>
    <text evidence="1">Binds 2 Zn(2+) ions per subunit. One is catalytic, whereas the other seems to have a structural role.</text>
</comment>
<comment type="subunit">
    <text evidence="1">Monomer.</text>
</comment>
<comment type="similarity">
    <text evidence="1">Belongs to the peptidase M54 family.</text>
</comment>